<name>GLPK_JANMA</name>
<proteinExistence type="inferred from homology"/>
<feature type="chain" id="PRO_1000077420" description="Glycerol kinase">
    <location>
        <begin position="1"/>
        <end position="498"/>
    </location>
</feature>
<feature type="binding site" evidence="1">
    <location>
        <position position="12"/>
    </location>
    <ligand>
        <name>ADP</name>
        <dbReference type="ChEBI" id="CHEBI:456216"/>
    </ligand>
</feature>
<feature type="binding site" evidence="1">
    <location>
        <position position="12"/>
    </location>
    <ligand>
        <name>ATP</name>
        <dbReference type="ChEBI" id="CHEBI:30616"/>
    </ligand>
</feature>
<feature type="binding site" evidence="1">
    <location>
        <position position="12"/>
    </location>
    <ligand>
        <name>sn-glycerol 3-phosphate</name>
        <dbReference type="ChEBI" id="CHEBI:57597"/>
    </ligand>
</feature>
<feature type="binding site" evidence="1">
    <location>
        <position position="13"/>
    </location>
    <ligand>
        <name>ATP</name>
        <dbReference type="ChEBI" id="CHEBI:30616"/>
    </ligand>
</feature>
<feature type="binding site" evidence="1">
    <location>
        <position position="14"/>
    </location>
    <ligand>
        <name>ATP</name>
        <dbReference type="ChEBI" id="CHEBI:30616"/>
    </ligand>
</feature>
<feature type="binding site" evidence="1">
    <location>
        <position position="16"/>
    </location>
    <ligand>
        <name>ADP</name>
        <dbReference type="ChEBI" id="CHEBI:456216"/>
    </ligand>
</feature>
<feature type="binding site" evidence="1">
    <location>
        <position position="82"/>
    </location>
    <ligand>
        <name>glycerol</name>
        <dbReference type="ChEBI" id="CHEBI:17754"/>
    </ligand>
</feature>
<feature type="binding site" evidence="1">
    <location>
        <position position="82"/>
    </location>
    <ligand>
        <name>sn-glycerol 3-phosphate</name>
        <dbReference type="ChEBI" id="CHEBI:57597"/>
    </ligand>
</feature>
<feature type="binding site" evidence="1">
    <location>
        <position position="83"/>
    </location>
    <ligand>
        <name>glycerol</name>
        <dbReference type="ChEBI" id="CHEBI:17754"/>
    </ligand>
</feature>
<feature type="binding site" evidence="1">
    <location>
        <position position="83"/>
    </location>
    <ligand>
        <name>sn-glycerol 3-phosphate</name>
        <dbReference type="ChEBI" id="CHEBI:57597"/>
    </ligand>
</feature>
<feature type="binding site" evidence="1">
    <location>
        <position position="134"/>
    </location>
    <ligand>
        <name>glycerol</name>
        <dbReference type="ChEBI" id="CHEBI:17754"/>
    </ligand>
</feature>
<feature type="binding site" evidence="1">
    <location>
        <position position="134"/>
    </location>
    <ligand>
        <name>sn-glycerol 3-phosphate</name>
        <dbReference type="ChEBI" id="CHEBI:57597"/>
    </ligand>
</feature>
<feature type="binding site" evidence="1">
    <location>
        <position position="241"/>
    </location>
    <ligand>
        <name>glycerol</name>
        <dbReference type="ChEBI" id="CHEBI:17754"/>
    </ligand>
</feature>
<feature type="binding site" evidence="1">
    <location>
        <position position="241"/>
    </location>
    <ligand>
        <name>sn-glycerol 3-phosphate</name>
        <dbReference type="ChEBI" id="CHEBI:57597"/>
    </ligand>
</feature>
<feature type="binding site" evidence="1">
    <location>
        <position position="242"/>
    </location>
    <ligand>
        <name>glycerol</name>
        <dbReference type="ChEBI" id="CHEBI:17754"/>
    </ligand>
</feature>
<feature type="binding site" evidence="1">
    <location>
        <position position="263"/>
    </location>
    <ligand>
        <name>ADP</name>
        <dbReference type="ChEBI" id="CHEBI:456216"/>
    </ligand>
</feature>
<feature type="binding site" evidence="1">
    <location>
        <position position="263"/>
    </location>
    <ligand>
        <name>ATP</name>
        <dbReference type="ChEBI" id="CHEBI:30616"/>
    </ligand>
</feature>
<feature type="binding site" evidence="1">
    <location>
        <position position="310"/>
    </location>
    <ligand>
        <name>ADP</name>
        <dbReference type="ChEBI" id="CHEBI:456216"/>
    </ligand>
</feature>
<feature type="binding site" evidence="1">
    <location>
        <position position="310"/>
    </location>
    <ligand>
        <name>ATP</name>
        <dbReference type="ChEBI" id="CHEBI:30616"/>
    </ligand>
</feature>
<feature type="binding site" evidence="1">
    <location>
        <position position="314"/>
    </location>
    <ligand>
        <name>ATP</name>
        <dbReference type="ChEBI" id="CHEBI:30616"/>
    </ligand>
</feature>
<feature type="binding site" evidence="1">
    <location>
        <position position="411"/>
    </location>
    <ligand>
        <name>ADP</name>
        <dbReference type="ChEBI" id="CHEBI:456216"/>
    </ligand>
</feature>
<feature type="binding site" evidence="1">
    <location>
        <position position="411"/>
    </location>
    <ligand>
        <name>ATP</name>
        <dbReference type="ChEBI" id="CHEBI:30616"/>
    </ligand>
</feature>
<feature type="binding site" evidence="1">
    <location>
        <position position="415"/>
    </location>
    <ligand>
        <name>ADP</name>
        <dbReference type="ChEBI" id="CHEBI:456216"/>
    </ligand>
</feature>
<gene>
    <name evidence="1" type="primary">glpK</name>
    <name type="ordered locus">mma_0268</name>
</gene>
<reference key="1">
    <citation type="journal article" date="2007" name="PLoS Genet.">
        <title>Genome analysis of Minibacterium massiliensis highlights the convergent evolution of water-living bacteria.</title>
        <authorList>
            <person name="Audic S."/>
            <person name="Robert C."/>
            <person name="Campagna B."/>
            <person name="Parinello H."/>
            <person name="Claverie J.-M."/>
            <person name="Raoult D."/>
            <person name="Drancourt M."/>
        </authorList>
    </citation>
    <scope>NUCLEOTIDE SEQUENCE [LARGE SCALE GENOMIC DNA]</scope>
    <source>
        <strain>Marseille</strain>
    </source>
</reference>
<accession>A6SUL1</accession>
<sequence>MSQFILAIDQGTTSSRAILFNHEGQIHGVAQQEYPQIFPEPGWVEHDANAIWNSQLAVARQVLKENKLSATDIAAIGITNQRETTVIWDRKTGQPIANAIVWQDRRTAAYCDQLRAEGKADLFQQKTGLVLDSYFSGTKVKWLLDHIPDARARAERGELAFGTIDSWLVYKLSGAHLTDSSNASRTLLFNIHTLQWDEELLAIFDIPASLLPAVVASSGIASHTHTELFGAPIAIAGIAGDQQAATFGQACHKPGMAKNTYGTGCFMLLNTGTHAISSHNNLLTTIGWTLGIGKAAQTNYMLEGGVFMGGAIVQWLRDGLGIIQRSADVEALATSVPDNGGVVFVPAFSGLGAPYWDSYARGTILGMTRGSNKAHIARAALESIAYQSVDLLDAMQKDAQSSSQELRVDGGASRNDLLMQFQADILNVPVIRPVVTETTALGAAYLAGLAVSFWQSAEEITAQWKMDKRFEPAMSADEREQRLHTWHRAVERAQAWES</sequence>
<dbReference type="EC" id="2.7.1.30" evidence="1"/>
<dbReference type="EMBL" id="CP000269">
    <property type="protein sequence ID" value="ABR89116.1"/>
    <property type="molecule type" value="Genomic_DNA"/>
</dbReference>
<dbReference type="RefSeq" id="WP_012078133.1">
    <property type="nucleotide sequence ID" value="NC_009659.1"/>
</dbReference>
<dbReference type="SMR" id="A6SUL1"/>
<dbReference type="STRING" id="375286.mma_0268"/>
<dbReference type="KEGG" id="mms:mma_0268"/>
<dbReference type="eggNOG" id="COG0554">
    <property type="taxonomic scope" value="Bacteria"/>
</dbReference>
<dbReference type="HOGENOM" id="CLU_009281_2_3_4"/>
<dbReference type="OrthoDB" id="9805576at2"/>
<dbReference type="UniPathway" id="UPA00618">
    <property type="reaction ID" value="UER00672"/>
</dbReference>
<dbReference type="Proteomes" id="UP000006388">
    <property type="component" value="Chromosome"/>
</dbReference>
<dbReference type="GO" id="GO:0005829">
    <property type="term" value="C:cytosol"/>
    <property type="evidence" value="ECO:0007669"/>
    <property type="project" value="TreeGrafter"/>
</dbReference>
<dbReference type="GO" id="GO:0005524">
    <property type="term" value="F:ATP binding"/>
    <property type="evidence" value="ECO:0007669"/>
    <property type="project" value="UniProtKB-UniRule"/>
</dbReference>
<dbReference type="GO" id="GO:0004370">
    <property type="term" value="F:glycerol kinase activity"/>
    <property type="evidence" value="ECO:0000250"/>
    <property type="project" value="UniProtKB"/>
</dbReference>
<dbReference type="GO" id="GO:0019563">
    <property type="term" value="P:glycerol catabolic process"/>
    <property type="evidence" value="ECO:0007669"/>
    <property type="project" value="UniProtKB-UniRule"/>
</dbReference>
<dbReference type="GO" id="GO:0006071">
    <property type="term" value="P:glycerol metabolic process"/>
    <property type="evidence" value="ECO:0000250"/>
    <property type="project" value="UniProtKB"/>
</dbReference>
<dbReference type="GO" id="GO:0006072">
    <property type="term" value="P:glycerol-3-phosphate metabolic process"/>
    <property type="evidence" value="ECO:0007669"/>
    <property type="project" value="InterPro"/>
</dbReference>
<dbReference type="CDD" id="cd07786">
    <property type="entry name" value="FGGY_EcGK_like"/>
    <property type="match status" value="1"/>
</dbReference>
<dbReference type="FunFam" id="3.30.420.40:FF:000007">
    <property type="entry name" value="Glycerol kinase"/>
    <property type="match status" value="1"/>
</dbReference>
<dbReference type="FunFam" id="3.30.420.40:FF:000008">
    <property type="entry name" value="Glycerol kinase"/>
    <property type="match status" value="1"/>
</dbReference>
<dbReference type="Gene3D" id="3.30.420.40">
    <property type="match status" value="2"/>
</dbReference>
<dbReference type="HAMAP" id="MF_00186">
    <property type="entry name" value="Glycerol_kin"/>
    <property type="match status" value="1"/>
</dbReference>
<dbReference type="InterPro" id="IPR043129">
    <property type="entry name" value="ATPase_NBD"/>
</dbReference>
<dbReference type="InterPro" id="IPR000577">
    <property type="entry name" value="Carb_kinase_FGGY"/>
</dbReference>
<dbReference type="InterPro" id="IPR018483">
    <property type="entry name" value="Carb_kinase_FGGY_CS"/>
</dbReference>
<dbReference type="InterPro" id="IPR018485">
    <property type="entry name" value="FGGY_C"/>
</dbReference>
<dbReference type="InterPro" id="IPR018484">
    <property type="entry name" value="FGGY_N"/>
</dbReference>
<dbReference type="InterPro" id="IPR005999">
    <property type="entry name" value="Glycerol_kin"/>
</dbReference>
<dbReference type="NCBIfam" id="TIGR01311">
    <property type="entry name" value="glycerol_kin"/>
    <property type="match status" value="1"/>
</dbReference>
<dbReference type="NCBIfam" id="NF000756">
    <property type="entry name" value="PRK00047.1"/>
    <property type="match status" value="1"/>
</dbReference>
<dbReference type="PANTHER" id="PTHR10196:SF69">
    <property type="entry name" value="GLYCEROL KINASE"/>
    <property type="match status" value="1"/>
</dbReference>
<dbReference type="PANTHER" id="PTHR10196">
    <property type="entry name" value="SUGAR KINASE"/>
    <property type="match status" value="1"/>
</dbReference>
<dbReference type="Pfam" id="PF02782">
    <property type="entry name" value="FGGY_C"/>
    <property type="match status" value="1"/>
</dbReference>
<dbReference type="Pfam" id="PF00370">
    <property type="entry name" value="FGGY_N"/>
    <property type="match status" value="1"/>
</dbReference>
<dbReference type="PIRSF" id="PIRSF000538">
    <property type="entry name" value="GlpK"/>
    <property type="match status" value="1"/>
</dbReference>
<dbReference type="SUPFAM" id="SSF53067">
    <property type="entry name" value="Actin-like ATPase domain"/>
    <property type="match status" value="2"/>
</dbReference>
<dbReference type="PROSITE" id="PS00933">
    <property type="entry name" value="FGGY_KINASES_1"/>
    <property type="match status" value="1"/>
</dbReference>
<dbReference type="PROSITE" id="PS00445">
    <property type="entry name" value="FGGY_KINASES_2"/>
    <property type="match status" value="1"/>
</dbReference>
<keyword id="KW-0067">ATP-binding</keyword>
<keyword id="KW-0319">Glycerol metabolism</keyword>
<keyword id="KW-0418">Kinase</keyword>
<keyword id="KW-0547">Nucleotide-binding</keyword>
<keyword id="KW-0808">Transferase</keyword>
<organism>
    <name type="scientific">Janthinobacterium sp. (strain Marseille)</name>
    <name type="common">Minibacterium massiliensis</name>
    <dbReference type="NCBI Taxonomy" id="375286"/>
    <lineage>
        <taxon>Bacteria</taxon>
        <taxon>Pseudomonadati</taxon>
        <taxon>Pseudomonadota</taxon>
        <taxon>Betaproteobacteria</taxon>
        <taxon>Burkholderiales</taxon>
        <taxon>Oxalobacteraceae</taxon>
        <taxon>Janthinobacterium</taxon>
    </lineage>
</organism>
<protein>
    <recommendedName>
        <fullName evidence="1">Glycerol kinase</fullName>
        <ecNumber evidence="1">2.7.1.30</ecNumber>
    </recommendedName>
    <alternativeName>
        <fullName evidence="1">ATP:glycerol 3-phosphotransferase</fullName>
    </alternativeName>
    <alternativeName>
        <fullName evidence="1">Glycerokinase</fullName>
        <shortName evidence="1">GK</shortName>
    </alternativeName>
</protein>
<comment type="function">
    <text evidence="1">Key enzyme in the regulation of glycerol uptake and metabolism. Catalyzes the phosphorylation of glycerol to yield sn-glycerol 3-phosphate.</text>
</comment>
<comment type="catalytic activity">
    <reaction evidence="1">
        <text>glycerol + ATP = sn-glycerol 3-phosphate + ADP + H(+)</text>
        <dbReference type="Rhea" id="RHEA:21644"/>
        <dbReference type="ChEBI" id="CHEBI:15378"/>
        <dbReference type="ChEBI" id="CHEBI:17754"/>
        <dbReference type="ChEBI" id="CHEBI:30616"/>
        <dbReference type="ChEBI" id="CHEBI:57597"/>
        <dbReference type="ChEBI" id="CHEBI:456216"/>
        <dbReference type="EC" id="2.7.1.30"/>
    </reaction>
</comment>
<comment type="activity regulation">
    <text evidence="1">Inhibited by fructose 1,6-bisphosphate (FBP).</text>
</comment>
<comment type="pathway">
    <text evidence="1">Polyol metabolism; glycerol degradation via glycerol kinase pathway; sn-glycerol 3-phosphate from glycerol: step 1/1.</text>
</comment>
<comment type="similarity">
    <text evidence="1">Belongs to the FGGY kinase family.</text>
</comment>
<evidence type="ECO:0000255" key="1">
    <source>
        <dbReference type="HAMAP-Rule" id="MF_00186"/>
    </source>
</evidence>